<accession>B7HEG4</accession>
<comment type="function">
    <text evidence="1">Catalyzes the ATP- as well as the pyrophosphate-dependent phosphorylation of a specific serine residue in HPr, a phosphocarrier protein of the phosphoenolpyruvate-dependent sugar phosphotransferase system (PTS). HprK/P also catalyzes the pyrophosphate-producing, inorganic phosphate-dependent dephosphorylation (phosphorolysis) of seryl-phosphorylated HPr (P-Ser-HPr). The two antagonistic activities of HprK/P are regulated by several intracellular metabolites, which change their concentration in response to the absence or presence of rapidly metabolisable carbon sources (glucose, fructose, etc.) in the growth medium. Also phosphorylates/dephosphorylates the HPr-like catabolite repression protein crh on a specific serine residue. Therefore, by controlling the phosphorylation state of HPr and crh, HPrK/P is a sensor enzyme that plays a major role in the regulation of carbon metabolism and sugar transport: it mediates carbon catabolite repression (CCR), and regulates PTS-catalyzed carbohydrate uptake and inducer exclusion.</text>
</comment>
<comment type="catalytic activity">
    <reaction evidence="1">
        <text>[HPr protein]-L-serine + ATP = [HPr protein]-O-phospho-L-serine + ADP + H(+)</text>
        <dbReference type="Rhea" id="RHEA:46600"/>
        <dbReference type="Rhea" id="RHEA-COMP:11602"/>
        <dbReference type="Rhea" id="RHEA-COMP:11603"/>
        <dbReference type="ChEBI" id="CHEBI:15378"/>
        <dbReference type="ChEBI" id="CHEBI:29999"/>
        <dbReference type="ChEBI" id="CHEBI:30616"/>
        <dbReference type="ChEBI" id="CHEBI:83421"/>
        <dbReference type="ChEBI" id="CHEBI:456216"/>
    </reaction>
</comment>
<comment type="catalytic activity">
    <reaction evidence="1">
        <text>[HPr protein]-O-phospho-L-serine + phosphate + H(+) = [HPr protein]-L-serine + diphosphate</text>
        <dbReference type="Rhea" id="RHEA:46604"/>
        <dbReference type="Rhea" id="RHEA-COMP:11602"/>
        <dbReference type="Rhea" id="RHEA-COMP:11603"/>
        <dbReference type="ChEBI" id="CHEBI:15378"/>
        <dbReference type="ChEBI" id="CHEBI:29999"/>
        <dbReference type="ChEBI" id="CHEBI:33019"/>
        <dbReference type="ChEBI" id="CHEBI:43474"/>
        <dbReference type="ChEBI" id="CHEBI:83421"/>
    </reaction>
</comment>
<comment type="cofactor">
    <cofactor evidence="1">
        <name>Mg(2+)</name>
        <dbReference type="ChEBI" id="CHEBI:18420"/>
    </cofactor>
</comment>
<comment type="subunit">
    <text evidence="1">Homohexamer.</text>
</comment>
<comment type="domain">
    <text evidence="1">The Walker A ATP-binding motif also binds Pi and PPi.</text>
</comment>
<comment type="miscellaneous">
    <text evidence="1">Both phosphorylation and phosphorolysis are carried out by the same active site and suggest a common mechanism for both reactions.</text>
</comment>
<comment type="similarity">
    <text evidence="1">Belongs to the HPrK/P family.</text>
</comment>
<reference key="1">
    <citation type="submission" date="2008-10" db="EMBL/GenBank/DDBJ databases">
        <title>Genome sequence of Bacillus cereus B4264.</title>
        <authorList>
            <person name="Dodson R.J."/>
            <person name="Durkin A.S."/>
            <person name="Rosovitz M.J."/>
            <person name="Rasko D.A."/>
            <person name="Hoffmaster A."/>
            <person name="Ravel J."/>
            <person name="Sutton G."/>
        </authorList>
    </citation>
    <scope>NUCLEOTIDE SEQUENCE [LARGE SCALE GENOMIC DNA]</scope>
    <source>
        <strain>B4264</strain>
    </source>
</reference>
<proteinExistence type="inferred from homology"/>
<keyword id="KW-0067">ATP-binding</keyword>
<keyword id="KW-0119">Carbohydrate metabolism</keyword>
<keyword id="KW-0418">Kinase</keyword>
<keyword id="KW-0460">Magnesium</keyword>
<keyword id="KW-0479">Metal-binding</keyword>
<keyword id="KW-0511">Multifunctional enzyme</keyword>
<keyword id="KW-0547">Nucleotide-binding</keyword>
<keyword id="KW-0723">Serine/threonine-protein kinase</keyword>
<keyword id="KW-0808">Transferase</keyword>
<gene>
    <name evidence="1" type="primary">hprK</name>
    <name type="ordered locus">BCB4264_A5282</name>
</gene>
<sequence length="309" mass="34601">MPKVRTKDLIEQFQLELISGEEGIHRPIDTSDLSRPGIEMAGFFTYYPADRVQLLGKTELTFFDTLTSEQKQERMKALCTEETPCIIVTRNQDVPDELLQASRESGMPLLRSSQTTTRLSSRLTNYLEGKLAPTTAVHGVLVDIYGVGVLITGQSGVGKSETALELVKRGHRLVADDSVEIRQEDEDMLVGSSPDLIEHLLEIRGLGIINVMTLFGAGAVRNYKRITLVINLEIWDQKKNYDRLGLDEEKMKIIDTELTKITLPVRPGRNLAVIIEVAAMNFRLKRMGVNAAQQFSERLMSAIELGNQE</sequence>
<name>HPRK_BACC4</name>
<organism>
    <name type="scientific">Bacillus cereus (strain B4264)</name>
    <dbReference type="NCBI Taxonomy" id="405532"/>
    <lineage>
        <taxon>Bacteria</taxon>
        <taxon>Bacillati</taxon>
        <taxon>Bacillota</taxon>
        <taxon>Bacilli</taxon>
        <taxon>Bacillales</taxon>
        <taxon>Bacillaceae</taxon>
        <taxon>Bacillus</taxon>
        <taxon>Bacillus cereus group</taxon>
    </lineage>
</organism>
<evidence type="ECO:0000255" key="1">
    <source>
        <dbReference type="HAMAP-Rule" id="MF_01249"/>
    </source>
</evidence>
<protein>
    <recommendedName>
        <fullName evidence="1">HPr kinase/phosphorylase</fullName>
        <shortName evidence="1">HPrK/P</shortName>
        <ecNumber evidence="1">2.7.11.-</ecNumber>
        <ecNumber evidence="1">2.7.4.-</ecNumber>
    </recommendedName>
    <alternativeName>
        <fullName evidence="1">HPr(Ser) kinase/phosphorylase</fullName>
    </alternativeName>
</protein>
<dbReference type="EC" id="2.7.11.-" evidence="1"/>
<dbReference type="EC" id="2.7.4.-" evidence="1"/>
<dbReference type="EMBL" id="CP001176">
    <property type="protein sequence ID" value="ACK62703.1"/>
    <property type="molecule type" value="Genomic_DNA"/>
</dbReference>
<dbReference type="RefSeq" id="WP_001127250.1">
    <property type="nucleotide sequence ID" value="NZ_VEHB01000004.1"/>
</dbReference>
<dbReference type="SMR" id="B7HEG4"/>
<dbReference type="GeneID" id="75088337"/>
<dbReference type="KEGG" id="bcb:BCB4264_A5282"/>
<dbReference type="HOGENOM" id="CLU_052030_0_1_9"/>
<dbReference type="Proteomes" id="UP000007096">
    <property type="component" value="Chromosome"/>
</dbReference>
<dbReference type="GO" id="GO:0005524">
    <property type="term" value="F:ATP binding"/>
    <property type="evidence" value="ECO:0007669"/>
    <property type="project" value="UniProtKB-UniRule"/>
</dbReference>
<dbReference type="GO" id="GO:0000287">
    <property type="term" value="F:magnesium ion binding"/>
    <property type="evidence" value="ECO:0007669"/>
    <property type="project" value="UniProtKB-UniRule"/>
</dbReference>
<dbReference type="GO" id="GO:0000155">
    <property type="term" value="F:phosphorelay sensor kinase activity"/>
    <property type="evidence" value="ECO:0007669"/>
    <property type="project" value="InterPro"/>
</dbReference>
<dbReference type="GO" id="GO:0004674">
    <property type="term" value="F:protein serine/threonine kinase activity"/>
    <property type="evidence" value="ECO:0007669"/>
    <property type="project" value="UniProtKB-KW"/>
</dbReference>
<dbReference type="GO" id="GO:0004712">
    <property type="term" value="F:protein serine/threonine/tyrosine kinase activity"/>
    <property type="evidence" value="ECO:0007669"/>
    <property type="project" value="UniProtKB-UniRule"/>
</dbReference>
<dbReference type="GO" id="GO:0006109">
    <property type="term" value="P:regulation of carbohydrate metabolic process"/>
    <property type="evidence" value="ECO:0007669"/>
    <property type="project" value="UniProtKB-UniRule"/>
</dbReference>
<dbReference type="CDD" id="cd01918">
    <property type="entry name" value="HprK_C"/>
    <property type="match status" value="1"/>
</dbReference>
<dbReference type="FunFam" id="3.40.1390.20:FF:000002">
    <property type="entry name" value="HPr kinase/phosphorylase"/>
    <property type="match status" value="1"/>
</dbReference>
<dbReference type="FunFam" id="3.40.50.300:FF:000174">
    <property type="entry name" value="HPr kinase/phosphorylase"/>
    <property type="match status" value="1"/>
</dbReference>
<dbReference type="Gene3D" id="3.40.1390.20">
    <property type="entry name" value="HprK N-terminal domain-like"/>
    <property type="match status" value="1"/>
</dbReference>
<dbReference type="Gene3D" id="3.40.50.300">
    <property type="entry name" value="P-loop containing nucleotide triphosphate hydrolases"/>
    <property type="match status" value="1"/>
</dbReference>
<dbReference type="HAMAP" id="MF_01249">
    <property type="entry name" value="HPr_kinase"/>
    <property type="match status" value="1"/>
</dbReference>
<dbReference type="InterPro" id="IPR003755">
    <property type="entry name" value="HPr(Ser)_kin/Pase"/>
</dbReference>
<dbReference type="InterPro" id="IPR011104">
    <property type="entry name" value="Hpr_kin/Pase_C"/>
</dbReference>
<dbReference type="InterPro" id="IPR011126">
    <property type="entry name" value="Hpr_kin/Pase_Hpr_N"/>
</dbReference>
<dbReference type="InterPro" id="IPR027417">
    <property type="entry name" value="P-loop_NTPase"/>
</dbReference>
<dbReference type="InterPro" id="IPR028979">
    <property type="entry name" value="Ser_kin/Pase_Hpr-like_N_sf"/>
</dbReference>
<dbReference type="NCBIfam" id="TIGR00679">
    <property type="entry name" value="hpr-ser"/>
    <property type="match status" value="1"/>
</dbReference>
<dbReference type="PANTHER" id="PTHR30305:SF1">
    <property type="entry name" value="HPR KINASE_PHOSPHORYLASE"/>
    <property type="match status" value="1"/>
</dbReference>
<dbReference type="PANTHER" id="PTHR30305">
    <property type="entry name" value="PROTEIN YJDM-RELATED"/>
    <property type="match status" value="1"/>
</dbReference>
<dbReference type="Pfam" id="PF07475">
    <property type="entry name" value="Hpr_kinase_C"/>
    <property type="match status" value="1"/>
</dbReference>
<dbReference type="Pfam" id="PF02603">
    <property type="entry name" value="Hpr_kinase_N"/>
    <property type="match status" value="1"/>
</dbReference>
<dbReference type="SUPFAM" id="SSF75138">
    <property type="entry name" value="HprK N-terminal domain-like"/>
    <property type="match status" value="1"/>
</dbReference>
<dbReference type="SUPFAM" id="SSF53795">
    <property type="entry name" value="PEP carboxykinase-like"/>
    <property type="match status" value="1"/>
</dbReference>
<feature type="chain" id="PRO_1000139886" description="HPr kinase/phosphorylase">
    <location>
        <begin position="1"/>
        <end position="309"/>
    </location>
</feature>
<feature type="region of interest" description="Important for the catalytic mechanism of both phosphorylation and dephosphorylation" evidence="1">
    <location>
        <begin position="201"/>
        <end position="210"/>
    </location>
</feature>
<feature type="region of interest" description="Important for the catalytic mechanism of dephosphorylation" evidence="1">
    <location>
        <begin position="264"/>
        <end position="269"/>
    </location>
</feature>
<feature type="active site" evidence="1">
    <location>
        <position position="138"/>
    </location>
</feature>
<feature type="active site" evidence="1">
    <location>
        <position position="159"/>
    </location>
</feature>
<feature type="active site" description="Proton acceptor; for phosphorylation activity. Proton donor; for dephosphorylation activity" evidence="1">
    <location>
        <position position="177"/>
    </location>
</feature>
<feature type="active site" evidence="1">
    <location>
        <position position="243"/>
    </location>
</feature>
<feature type="binding site" evidence="1">
    <location>
        <begin position="153"/>
        <end position="160"/>
    </location>
    <ligand>
        <name>ATP</name>
        <dbReference type="ChEBI" id="CHEBI:30616"/>
    </ligand>
</feature>
<feature type="binding site" evidence="1">
    <location>
        <position position="160"/>
    </location>
    <ligand>
        <name>Mg(2+)</name>
        <dbReference type="ChEBI" id="CHEBI:18420"/>
    </ligand>
</feature>
<feature type="binding site" evidence="1">
    <location>
        <position position="202"/>
    </location>
    <ligand>
        <name>Mg(2+)</name>
        <dbReference type="ChEBI" id="CHEBI:18420"/>
    </ligand>
</feature>